<dbReference type="EMBL" id="CP001205">
    <property type="protein sequence ID" value="ACK74752.1"/>
    <property type="molecule type" value="Genomic_DNA"/>
</dbReference>
<dbReference type="RefSeq" id="WP_002556782.1">
    <property type="nucleotide sequence ID" value="NC_011728.1"/>
</dbReference>
<dbReference type="SMR" id="B7J1B7"/>
<dbReference type="GeneID" id="56567611"/>
<dbReference type="KEGG" id="bbz:BbuZS7_0184"/>
<dbReference type="HOGENOM" id="CLU_164837_0_2_12"/>
<dbReference type="Proteomes" id="UP000006901">
    <property type="component" value="Chromosome"/>
</dbReference>
<dbReference type="GO" id="GO:0005829">
    <property type="term" value="C:cytosol"/>
    <property type="evidence" value="ECO:0007669"/>
    <property type="project" value="TreeGrafter"/>
</dbReference>
<dbReference type="GO" id="GO:0048027">
    <property type="term" value="F:mRNA 5'-UTR binding"/>
    <property type="evidence" value="ECO:0007669"/>
    <property type="project" value="UniProtKB-UniRule"/>
</dbReference>
<dbReference type="GO" id="GO:0044781">
    <property type="term" value="P:bacterial-type flagellum organization"/>
    <property type="evidence" value="ECO:0007669"/>
    <property type="project" value="UniProtKB-KW"/>
</dbReference>
<dbReference type="GO" id="GO:0006402">
    <property type="term" value="P:mRNA catabolic process"/>
    <property type="evidence" value="ECO:0007669"/>
    <property type="project" value="InterPro"/>
</dbReference>
<dbReference type="GO" id="GO:0045947">
    <property type="term" value="P:negative regulation of translational initiation"/>
    <property type="evidence" value="ECO:0007669"/>
    <property type="project" value="UniProtKB-UniRule"/>
</dbReference>
<dbReference type="GO" id="GO:1902208">
    <property type="term" value="P:regulation of bacterial-type flagellum assembly"/>
    <property type="evidence" value="ECO:0007669"/>
    <property type="project" value="UniProtKB-UniRule"/>
</dbReference>
<dbReference type="GO" id="GO:0006109">
    <property type="term" value="P:regulation of carbohydrate metabolic process"/>
    <property type="evidence" value="ECO:0007669"/>
    <property type="project" value="InterPro"/>
</dbReference>
<dbReference type="FunFam" id="2.60.40.4380:FF:000002">
    <property type="entry name" value="Translational regulator CsrA"/>
    <property type="match status" value="1"/>
</dbReference>
<dbReference type="Gene3D" id="2.60.40.4380">
    <property type="entry name" value="Translational regulator CsrA"/>
    <property type="match status" value="1"/>
</dbReference>
<dbReference type="HAMAP" id="MF_00167">
    <property type="entry name" value="CsrA"/>
    <property type="match status" value="1"/>
</dbReference>
<dbReference type="InterPro" id="IPR003751">
    <property type="entry name" value="CsrA"/>
</dbReference>
<dbReference type="InterPro" id="IPR036107">
    <property type="entry name" value="CsrA_sf"/>
</dbReference>
<dbReference type="NCBIfam" id="TIGR00202">
    <property type="entry name" value="csrA"/>
    <property type="match status" value="1"/>
</dbReference>
<dbReference type="NCBIfam" id="NF002469">
    <property type="entry name" value="PRK01712.1"/>
    <property type="match status" value="1"/>
</dbReference>
<dbReference type="PANTHER" id="PTHR34984">
    <property type="entry name" value="CARBON STORAGE REGULATOR"/>
    <property type="match status" value="1"/>
</dbReference>
<dbReference type="PANTHER" id="PTHR34984:SF1">
    <property type="entry name" value="CARBON STORAGE REGULATOR"/>
    <property type="match status" value="1"/>
</dbReference>
<dbReference type="Pfam" id="PF02599">
    <property type="entry name" value="CsrA"/>
    <property type="match status" value="1"/>
</dbReference>
<dbReference type="SUPFAM" id="SSF117130">
    <property type="entry name" value="CsrA-like"/>
    <property type="match status" value="1"/>
</dbReference>
<comment type="function">
    <text evidence="1">A translational regulator that binds mRNA to regulate translation initiation and/or mRNA stability. Usually binds in the 5'-UTR at or near the Shine-Dalgarno sequence preventing ribosome-binding, thus repressing translation. Its main target seems to be the major flagellin gene, while its function is anatagonized by FliW.</text>
</comment>
<comment type="subunit">
    <text evidence="1">Homodimer; the beta-strands of each monomer intercalate to form a hydrophobic core, while the alpha-helices form wings that extend away from the core.</text>
</comment>
<comment type="subcellular location">
    <subcellularLocation>
        <location evidence="1">Cytoplasm</location>
    </subcellularLocation>
</comment>
<comment type="similarity">
    <text evidence="1">Belongs to the CsrA/RsmA family.</text>
</comment>
<keyword id="KW-1005">Bacterial flagellum biogenesis</keyword>
<keyword id="KW-0963">Cytoplasm</keyword>
<keyword id="KW-0678">Repressor</keyword>
<keyword id="KW-0694">RNA-binding</keyword>
<keyword id="KW-0810">Translation regulation</keyword>
<gene>
    <name evidence="1" type="primary">csrA</name>
    <name type="ordered locus">BbuZS7_0184</name>
</gene>
<sequence length="81" mass="9530">MLVLSRKANESIKINSDIEVLILEIKKDAVKIAIKAPENIKIFRSEIYEFIIEENKKSLLKDKHNISKIKSLFNHYFKNEN</sequence>
<feature type="chain" id="PRO_1000118231" description="Translational regulator CsrA">
    <location>
        <begin position="1"/>
        <end position="81"/>
    </location>
</feature>
<evidence type="ECO:0000255" key="1">
    <source>
        <dbReference type="HAMAP-Rule" id="MF_00167"/>
    </source>
</evidence>
<organism>
    <name type="scientific">Borreliella burgdorferi (strain ZS7)</name>
    <name type="common">Borrelia burgdorferi</name>
    <dbReference type="NCBI Taxonomy" id="445985"/>
    <lineage>
        <taxon>Bacteria</taxon>
        <taxon>Pseudomonadati</taxon>
        <taxon>Spirochaetota</taxon>
        <taxon>Spirochaetia</taxon>
        <taxon>Spirochaetales</taxon>
        <taxon>Borreliaceae</taxon>
        <taxon>Borreliella</taxon>
    </lineage>
</organism>
<protein>
    <recommendedName>
        <fullName evidence="1">Translational regulator CsrA</fullName>
    </recommendedName>
</protein>
<proteinExistence type="inferred from homology"/>
<name>CSRA_BORBZ</name>
<reference key="1">
    <citation type="journal article" date="2011" name="J. Bacteriol.">
        <title>Whole-genome sequences of thirteen isolates of Borrelia burgdorferi.</title>
        <authorList>
            <person name="Schutzer S.E."/>
            <person name="Fraser-Liggett C.M."/>
            <person name="Casjens S.R."/>
            <person name="Qiu W.G."/>
            <person name="Dunn J.J."/>
            <person name="Mongodin E.F."/>
            <person name="Luft B.J."/>
        </authorList>
    </citation>
    <scope>NUCLEOTIDE SEQUENCE [LARGE SCALE GENOMIC DNA]</scope>
    <source>
        <strain>ZS7</strain>
    </source>
</reference>
<accession>B7J1B7</accession>